<dbReference type="EC" id="6.1.1.17" evidence="1"/>
<dbReference type="EMBL" id="AE016795">
    <property type="protein sequence ID" value="AAO08773.1"/>
    <property type="molecule type" value="Genomic_DNA"/>
</dbReference>
<dbReference type="RefSeq" id="WP_011078351.1">
    <property type="nucleotide sequence ID" value="NC_004459.3"/>
</dbReference>
<dbReference type="SMR" id="Q8DFH5"/>
<dbReference type="KEGG" id="vvu:VV1_0236"/>
<dbReference type="HOGENOM" id="CLU_015768_6_3_6"/>
<dbReference type="Proteomes" id="UP000002275">
    <property type="component" value="Chromosome 1"/>
</dbReference>
<dbReference type="GO" id="GO:0005829">
    <property type="term" value="C:cytosol"/>
    <property type="evidence" value="ECO:0007669"/>
    <property type="project" value="TreeGrafter"/>
</dbReference>
<dbReference type="GO" id="GO:0005524">
    <property type="term" value="F:ATP binding"/>
    <property type="evidence" value="ECO:0007669"/>
    <property type="project" value="UniProtKB-UniRule"/>
</dbReference>
<dbReference type="GO" id="GO:0004818">
    <property type="term" value="F:glutamate-tRNA ligase activity"/>
    <property type="evidence" value="ECO:0007669"/>
    <property type="project" value="UniProtKB-UniRule"/>
</dbReference>
<dbReference type="GO" id="GO:0000049">
    <property type="term" value="F:tRNA binding"/>
    <property type="evidence" value="ECO:0007669"/>
    <property type="project" value="InterPro"/>
</dbReference>
<dbReference type="GO" id="GO:0008270">
    <property type="term" value="F:zinc ion binding"/>
    <property type="evidence" value="ECO:0007669"/>
    <property type="project" value="InterPro"/>
</dbReference>
<dbReference type="GO" id="GO:0006424">
    <property type="term" value="P:glutamyl-tRNA aminoacylation"/>
    <property type="evidence" value="ECO:0007669"/>
    <property type="project" value="UniProtKB-UniRule"/>
</dbReference>
<dbReference type="CDD" id="cd00808">
    <property type="entry name" value="GluRS_core"/>
    <property type="match status" value="1"/>
</dbReference>
<dbReference type="FunFam" id="1.10.10.350:FF:000001">
    <property type="entry name" value="Glutamate--tRNA ligase"/>
    <property type="match status" value="1"/>
</dbReference>
<dbReference type="FunFam" id="3.40.50.620:FF:000007">
    <property type="entry name" value="Glutamate--tRNA ligase"/>
    <property type="match status" value="1"/>
</dbReference>
<dbReference type="Gene3D" id="1.10.10.350">
    <property type="match status" value="1"/>
</dbReference>
<dbReference type="Gene3D" id="3.40.50.620">
    <property type="entry name" value="HUPs"/>
    <property type="match status" value="1"/>
</dbReference>
<dbReference type="HAMAP" id="MF_00022">
    <property type="entry name" value="Glu_tRNA_synth_type1"/>
    <property type="match status" value="1"/>
</dbReference>
<dbReference type="InterPro" id="IPR045462">
    <property type="entry name" value="aa-tRNA-synth_I_cd-bd"/>
</dbReference>
<dbReference type="InterPro" id="IPR020751">
    <property type="entry name" value="aa-tRNA-synth_I_codon-bd_sub2"/>
</dbReference>
<dbReference type="InterPro" id="IPR001412">
    <property type="entry name" value="aa-tRNA-synth_I_CS"/>
</dbReference>
<dbReference type="InterPro" id="IPR008925">
    <property type="entry name" value="aa_tRNA-synth_I_cd-bd_sf"/>
</dbReference>
<dbReference type="InterPro" id="IPR004527">
    <property type="entry name" value="Glu-tRNA-ligase_bac/mito"/>
</dbReference>
<dbReference type="InterPro" id="IPR000924">
    <property type="entry name" value="Glu/Gln-tRNA-synth"/>
</dbReference>
<dbReference type="InterPro" id="IPR020058">
    <property type="entry name" value="Glu/Gln-tRNA-synth_Ib_cat-dom"/>
</dbReference>
<dbReference type="InterPro" id="IPR049940">
    <property type="entry name" value="GluQ/Sye"/>
</dbReference>
<dbReference type="InterPro" id="IPR033910">
    <property type="entry name" value="GluRS_core"/>
</dbReference>
<dbReference type="InterPro" id="IPR014729">
    <property type="entry name" value="Rossmann-like_a/b/a_fold"/>
</dbReference>
<dbReference type="NCBIfam" id="TIGR00464">
    <property type="entry name" value="gltX_bact"/>
    <property type="match status" value="1"/>
</dbReference>
<dbReference type="PANTHER" id="PTHR43311">
    <property type="entry name" value="GLUTAMATE--TRNA LIGASE"/>
    <property type="match status" value="1"/>
</dbReference>
<dbReference type="PANTHER" id="PTHR43311:SF2">
    <property type="entry name" value="GLUTAMATE--TRNA LIGASE, MITOCHONDRIAL-RELATED"/>
    <property type="match status" value="1"/>
</dbReference>
<dbReference type="Pfam" id="PF19269">
    <property type="entry name" value="Anticodon_2"/>
    <property type="match status" value="1"/>
</dbReference>
<dbReference type="Pfam" id="PF00749">
    <property type="entry name" value="tRNA-synt_1c"/>
    <property type="match status" value="1"/>
</dbReference>
<dbReference type="PRINTS" id="PR00987">
    <property type="entry name" value="TRNASYNTHGLU"/>
</dbReference>
<dbReference type="SUPFAM" id="SSF48163">
    <property type="entry name" value="An anticodon-binding domain of class I aminoacyl-tRNA synthetases"/>
    <property type="match status" value="1"/>
</dbReference>
<dbReference type="SUPFAM" id="SSF52374">
    <property type="entry name" value="Nucleotidylyl transferase"/>
    <property type="match status" value="1"/>
</dbReference>
<dbReference type="PROSITE" id="PS00178">
    <property type="entry name" value="AA_TRNA_LIGASE_I"/>
    <property type="match status" value="1"/>
</dbReference>
<feature type="chain" id="PRO_0000119694" description="Glutamate--tRNA ligase">
    <location>
        <begin position="1"/>
        <end position="474"/>
    </location>
</feature>
<feature type="short sequence motif" description="'HIGH' region" evidence="1">
    <location>
        <begin position="9"/>
        <end position="19"/>
    </location>
</feature>
<feature type="short sequence motif" description="'KMSKS' region" evidence="1">
    <location>
        <begin position="240"/>
        <end position="244"/>
    </location>
</feature>
<feature type="binding site" evidence="1">
    <location>
        <position position="243"/>
    </location>
    <ligand>
        <name>ATP</name>
        <dbReference type="ChEBI" id="CHEBI:30616"/>
    </ligand>
</feature>
<accession>Q8DFH5</accession>
<organism>
    <name type="scientific">Vibrio vulnificus (strain CMCP6)</name>
    <dbReference type="NCBI Taxonomy" id="216895"/>
    <lineage>
        <taxon>Bacteria</taxon>
        <taxon>Pseudomonadati</taxon>
        <taxon>Pseudomonadota</taxon>
        <taxon>Gammaproteobacteria</taxon>
        <taxon>Vibrionales</taxon>
        <taxon>Vibrionaceae</taxon>
        <taxon>Vibrio</taxon>
    </lineage>
</organism>
<keyword id="KW-0030">Aminoacyl-tRNA synthetase</keyword>
<keyword id="KW-0067">ATP-binding</keyword>
<keyword id="KW-0963">Cytoplasm</keyword>
<keyword id="KW-0436">Ligase</keyword>
<keyword id="KW-0547">Nucleotide-binding</keyword>
<keyword id="KW-0648">Protein biosynthesis</keyword>
<gene>
    <name evidence="1" type="primary">gltX</name>
    <name type="ordered locus">VV1_0236</name>
</gene>
<proteinExistence type="inferred from homology"/>
<evidence type="ECO:0000255" key="1">
    <source>
        <dbReference type="HAMAP-Rule" id="MF_00022"/>
    </source>
</evidence>
<sequence>MTVKTRFAPSPTGYLHVGGARTALYSWLYAKSQGGEFVLRIEDTDLERNSQEAVDAILEGMQWLGLEWNEGPYFQTQRFDRYNEMVDKLLAEDKAYKCYASKELLDEVRAEQEANKEMPRYDAEHPKIKAANEAAKDGDPCVIRFRNPKEGSVVFEDQIRGRIEISNSQMDDLIIRRTDGSPTYNFCVVVDDWDMGITHVIRGEDHINNTPRQINIYEALGAPVPTFAHCAMILGDDGAKLSKRHGAVSVMQYRDMGYLPVALNNYLVRLGWSHGDQEIFSQEEMINLFSLNAISKSASAFNTDKLLWLNNHYIKTSDPEYVAEHLQWHLDQKGIKTENGPAITDVIKLVGERCNTLVELADQIGYFYQDFDAFDADAAKKHLRGVAKQPLEVALAKVEALTEWTTENLHQVIADVCTELEIGMGKIGMPLRVAVTGGGQSPSVDAVMQLIGKERVVARIKMALAFIAEREANA</sequence>
<reference key="1">
    <citation type="submission" date="2002-12" db="EMBL/GenBank/DDBJ databases">
        <title>Complete genome sequence of Vibrio vulnificus CMCP6.</title>
        <authorList>
            <person name="Rhee J.H."/>
            <person name="Kim S.Y."/>
            <person name="Chung S.S."/>
            <person name="Kim J.J."/>
            <person name="Moon Y.H."/>
            <person name="Jeong H."/>
            <person name="Choy H.E."/>
        </authorList>
    </citation>
    <scope>NUCLEOTIDE SEQUENCE [LARGE SCALE GENOMIC DNA]</scope>
    <source>
        <strain>CMCP6</strain>
    </source>
</reference>
<protein>
    <recommendedName>
        <fullName evidence="1">Glutamate--tRNA ligase</fullName>
        <ecNumber evidence="1">6.1.1.17</ecNumber>
    </recommendedName>
    <alternativeName>
        <fullName evidence="1">Glutamyl-tRNA synthetase</fullName>
        <shortName evidence="1">GluRS</shortName>
    </alternativeName>
</protein>
<comment type="function">
    <text evidence="1">Catalyzes the attachment of glutamate to tRNA(Glu) in a two-step reaction: glutamate is first activated by ATP to form Glu-AMP and then transferred to the acceptor end of tRNA(Glu).</text>
</comment>
<comment type="catalytic activity">
    <reaction evidence="1">
        <text>tRNA(Glu) + L-glutamate + ATP = L-glutamyl-tRNA(Glu) + AMP + diphosphate</text>
        <dbReference type="Rhea" id="RHEA:23540"/>
        <dbReference type="Rhea" id="RHEA-COMP:9663"/>
        <dbReference type="Rhea" id="RHEA-COMP:9680"/>
        <dbReference type="ChEBI" id="CHEBI:29985"/>
        <dbReference type="ChEBI" id="CHEBI:30616"/>
        <dbReference type="ChEBI" id="CHEBI:33019"/>
        <dbReference type="ChEBI" id="CHEBI:78442"/>
        <dbReference type="ChEBI" id="CHEBI:78520"/>
        <dbReference type="ChEBI" id="CHEBI:456215"/>
        <dbReference type="EC" id="6.1.1.17"/>
    </reaction>
</comment>
<comment type="subunit">
    <text evidence="1">Monomer.</text>
</comment>
<comment type="subcellular location">
    <subcellularLocation>
        <location evidence="1">Cytoplasm</location>
    </subcellularLocation>
</comment>
<comment type="similarity">
    <text evidence="1">Belongs to the class-I aminoacyl-tRNA synthetase family. Glutamate--tRNA ligase type 1 subfamily.</text>
</comment>
<name>SYE_VIBVU</name>